<comment type="function">
    <text evidence="1">Protease subunit of a proteasome-like degradation complex believed to be a general protein degrading machinery.</text>
</comment>
<comment type="catalytic activity">
    <reaction evidence="1">
        <text>ATP-dependent cleavage of peptide bonds with broad specificity.</text>
        <dbReference type="EC" id="3.4.25.2"/>
    </reaction>
</comment>
<comment type="activity regulation">
    <text evidence="1">Allosterically activated by HslU binding.</text>
</comment>
<comment type="subunit">
    <text evidence="1">A double ring-shaped homohexamer of HslV is capped on each side by a ring-shaped HslU homohexamer. The assembly of the HslU/HslV complex is dependent on binding of ATP.</text>
</comment>
<comment type="subcellular location">
    <subcellularLocation>
        <location evidence="1">Cytoplasm</location>
    </subcellularLocation>
</comment>
<comment type="similarity">
    <text evidence="1">Belongs to the peptidase T1B family. HslV subfamily.</text>
</comment>
<proteinExistence type="inferred from homology"/>
<accession>Q2ILD4</accession>
<sequence length="181" mass="19453">MRPMHGTTVLCVRREGRVVIAGDGQVTLDKTVMKATARKVRRLGEGQVVAGFAGATADAFQLFELFEKKLKEHARSLPRAAVELAKQWRTDRMLRRLEALLVVADREHVLVLSGAGDVIEPDPVANGAAVAIGSGGPYALAAARALLAHSSLDARRVAEEAMKLAAEICIYTNGNLTIEEL</sequence>
<keyword id="KW-0021">Allosteric enzyme</keyword>
<keyword id="KW-0963">Cytoplasm</keyword>
<keyword id="KW-0378">Hydrolase</keyword>
<keyword id="KW-0479">Metal-binding</keyword>
<keyword id="KW-0645">Protease</keyword>
<keyword id="KW-1185">Reference proteome</keyword>
<keyword id="KW-0915">Sodium</keyword>
<keyword id="KW-0888">Threonine protease</keyword>
<reference key="1">
    <citation type="submission" date="2006-01" db="EMBL/GenBank/DDBJ databases">
        <title>Complete sequence of Anaeromyxobacter dehalogenans 2CP-C.</title>
        <authorList>
            <person name="Copeland A."/>
            <person name="Lucas S."/>
            <person name="Lapidus A."/>
            <person name="Barry K."/>
            <person name="Detter J.C."/>
            <person name="Glavina T."/>
            <person name="Hammon N."/>
            <person name="Israni S."/>
            <person name="Pitluck S."/>
            <person name="Brettin T."/>
            <person name="Bruce D."/>
            <person name="Han C."/>
            <person name="Tapia R."/>
            <person name="Gilna P."/>
            <person name="Kiss H."/>
            <person name="Schmutz J."/>
            <person name="Larimer F."/>
            <person name="Land M."/>
            <person name="Kyrpides N."/>
            <person name="Anderson I."/>
            <person name="Sanford R.A."/>
            <person name="Ritalahti K.M."/>
            <person name="Thomas H.S."/>
            <person name="Kirby J.R."/>
            <person name="Zhulin I.B."/>
            <person name="Loeffler F.E."/>
            <person name="Richardson P."/>
        </authorList>
    </citation>
    <scope>NUCLEOTIDE SEQUENCE [LARGE SCALE GENOMIC DNA]</scope>
    <source>
        <strain>2CP-C</strain>
    </source>
</reference>
<feature type="chain" id="PRO_0000336763" description="ATP-dependent protease subunit HslV">
    <location>
        <begin position="1"/>
        <end position="181"/>
    </location>
</feature>
<feature type="active site" evidence="1">
    <location>
        <position position="7"/>
    </location>
</feature>
<feature type="binding site" evidence="1">
    <location>
        <position position="166"/>
    </location>
    <ligand>
        <name>Na(+)</name>
        <dbReference type="ChEBI" id="CHEBI:29101"/>
    </ligand>
</feature>
<feature type="binding site" evidence="1">
    <location>
        <position position="169"/>
    </location>
    <ligand>
        <name>Na(+)</name>
        <dbReference type="ChEBI" id="CHEBI:29101"/>
    </ligand>
</feature>
<feature type="binding site" evidence="1">
    <location>
        <position position="172"/>
    </location>
    <ligand>
        <name>Na(+)</name>
        <dbReference type="ChEBI" id="CHEBI:29101"/>
    </ligand>
</feature>
<dbReference type="EC" id="3.4.25.2" evidence="1"/>
<dbReference type="EMBL" id="CP000251">
    <property type="protein sequence ID" value="ABC82464.1"/>
    <property type="molecule type" value="Genomic_DNA"/>
</dbReference>
<dbReference type="RefSeq" id="WP_011421746.1">
    <property type="nucleotide sequence ID" value="NC_007760.1"/>
</dbReference>
<dbReference type="SMR" id="Q2ILD4"/>
<dbReference type="STRING" id="290397.Adeh_2694"/>
<dbReference type="MEROPS" id="T01.006"/>
<dbReference type="KEGG" id="ade:Adeh_2694"/>
<dbReference type="eggNOG" id="COG5405">
    <property type="taxonomic scope" value="Bacteria"/>
</dbReference>
<dbReference type="HOGENOM" id="CLU_093872_1_0_7"/>
<dbReference type="OrthoDB" id="9804884at2"/>
<dbReference type="Proteomes" id="UP000001935">
    <property type="component" value="Chromosome"/>
</dbReference>
<dbReference type="GO" id="GO:0009376">
    <property type="term" value="C:HslUV protease complex"/>
    <property type="evidence" value="ECO:0007669"/>
    <property type="project" value="UniProtKB-UniRule"/>
</dbReference>
<dbReference type="GO" id="GO:0005839">
    <property type="term" value="C:proteasome core complex"/>
    <property type="evidence" value="ECO:0007669"/>
    <property type="project" value="InterPro"/>
</dbReference>
<dbReference type="GO" id="GO:0046872">
    <property type="term" value="F:metal ion binding"/>
    <property type="evidence" value="ECO:0007669"/>
    <property type="project" value="UniProtKB-KW"/>
</dbReference>
<dbReference type="GO" id="GO:0004298">
    <property type="term" value="F:threonine-type endopeptidase activity"/>
    <property type="evidence" value="ECO:0007669"/>
    <property type="project" value="UniProtKB-KW"/>
</dbReference>
<dbReference type="GO" id="GO:0051603">
    <property type="term" value="P:proteolysis involved in protein catabolic process"/>
    <property type="evidence" value="ECO:0007669"/>
    <property type="project" value="InterPro"/>
</dbReference>
<dbReference type="CDD" id="cd01913">
    <property type="entry name" value="protease_HslV"/>
    <property type="match status" value="1"/>
</dbReference>
<dbReference type="Gene3D" id="3.60.20.10">
    <property type="entry name" value="Glutamine Phosphoribosylpyrophosphate, subunit 1, domain 1"/>
    <property type="match status" value="1"/>
</dbReference>
<dbReference type="HAMAP" id="MF_00248">
    <property type="entry name" value="HslV"/>
    <property type="match status" value="1"/>
</dbReference>
<dbReference type="InterPro" id="IPR022281">
    <property type="entry name" value="ATP-dep_Prtase_HsIV_su"/>
</dbReference>
<dbReference type="InterPro" id="IPR029055">
    <property type="entry name" value="Ntn_hydrolases_N"/>
</dbReference>
<dbReference type="InterPro" id="IPR001353">
    <property type="entry name" value="Proteasome_sua/b"/>
</dbReference>
<dbReference type="InterPro" id="IPR023333">
    <property type="entry name" value="Proteasome_suB-type"/>
</dbReference>
<dbReference type="NCBIfam" id="TIGR03692">
    <property type="entry name" value="ATP_dep_HslV"/>
    <property type="match status" value="1"/>
</dbReference>
<dbReference type="NCBIfam" id="NF003964">
    <property type="entry name" value="PRK05456.1"/>
    <property type="match status" value="1"/>
</dbReference>
<dbReference type="PANTHER" id="PTHR32194:SF0">
    <property type="entry name" value="ATP-DEPENDENT PROTEASE SUBUNIT HSLV"/>
    <property type="match status" value="1"/>
</dbReference>
<dbReference type="PANTHER" id="PTHR32194">
    <property type="entry name" value="METALLOPROTEASE TLDD"/>
    <property type="match status" value="1"/>
</dbReference>
<dbReference type="Pfam" id="PF00227">
    <property type="entry name" value="Proteasome"/>
    <property type="match status" value="1"/>
</dbReference>
<dbReference type="PIRSF" id="PIRSF039093">
    <property type="entry name" value="HslV"/>
    <property type="match status" value="1"/>
</dbReference>
<dbReference type="SUPFAM" id="SSF56235">
    <property type="entry name" value="N-terminal nucleophile aminohydrolases (Ntn hydrolases)"/>
    <property type="match status" value="1"/>
</dbReference>
<dbReference type="PROSITE" id="PS51476">
    <property type="entry name" value="PROTEASOME_BETA_2"/>
    <property type="match status" value="1"/>
</dbReference>
<name>HSLV_ANADE</name>
<evidence type="ECO:0000255" key="1">
    <source>
        <dbReference type="HAMAP-Rule" id="MF_00248"/>
    </source>
</evidence>
<organism>
    <name type="scientific">Anaeromyxobacter dehalogenans (strain 2CP-C)</name>
    <dbReference type="NCBI Taxonomy" id="290397"/>
    <lineage>
        <taxon>Bacteria</taxon>
        <taxon>Pseudomonadati</taxon>
        <taxon>Myxococcota</taxon>
        <taxon>Myxococcia</taxon>
        <taxon>Myxococcales</taxon>
        <taxon>Cystobacterineae</taxon>
        <taxon>Anaeromyxobacteraceae</taxon>
        <taxon>Anaeromyxobacter</taxon>
    </lineage>
</organism>
<protein>
    <recommendedName>
        <fullName evidence="1">ATP-dependent protease subunit HslV</fullName>
        <ecNumber evidence="1">3.4.25.2</ecNumber>
    </recommendedName>
</protein>
<gene>
    <name evidence="1" type="primary">hslV</name>
    <name type="ordered locus">Adeh_2694</name>
</gene>